<name>ISPF_HALHL</name>
<feature type="chain" id="PRO_1000022846" description="2-C-methyl-D-erythritol 2,4-cyclodiphosphate synthase">
    <location>
        <begin position="1"/>
        <end position="163"/>
    </location>
</feature>
<feature type="binding site" evidence="1">
    <location>
        <begin position="9"/>
        <end position="11"/>
    </location>
    <ligand>
        <name>4-CDP-2-C-methyl-D-erythritol 2-phosphate</name>
        <dbReference type="ChEBI" id="CHEBI:57919"/>
    </ligand>
</feature>
<feature type="binding site" evidence="1">
    <location>
        <position position="9"/>
    </location>
    <ligand>
        <name>a divalent metal cation</name>
        <dbReference type="ChEBI" id="CHEBI:60240"/>
    </ligand>
</feature>
<feature type="binding site" evidence="1">
    <location>
        <position position="11"/>
    </location>
    <ligand>
        <name>a divalent metal cation</name>
        <dbReference type="ChEBI" id="CHEBI:60240"/>
    </ligand>
</feature>
<feature type="binding site" evidence="1">
    <location>
        <begin position="36"/>
        <end position="37"/>
    </location>
    <ligand>
        <name>4-CDP-2-C-methyl-D-erythritol 2-phosphate</name>
        <dbReference type="ChEBI" id="CHEBI:57919"/>
    </ligand>
</feature>
<feature type="binding site" evidence="1">
    <location>
        <position position="44"/>
    </location>
    <ligand>
        <name>a divalent metal cation</name>
        <dbReference type="ChEBI" id="CHEBI:60240"/>
    </ligand>
</feature>
<feature type="binding site" evidence="1">
    <location>
        <begin position="58"/>
        <end position="60"/>
    </location>
    <ligand>
        <name>4-CDP-2-C-methyl-D-erythritol 2-phosphate</name>
        <dbReference type="ChEBI" id="CHEBI:57919"/>
    </ligand>
</feature>
<feature type="binding site" evidence="1">
    <location>
        <begin position="63"/>
        <end position="67"/>
    </location>
    <ligand>
        <name>4-CDP-2-C-methyl-D-erythritol 2-phosphate</name>
        <dbReference type="ChEBI" id="CHEBI:57919"/>
    </ligand>
</feature>
<feature type="binding site" evidence="1">
    <location>
        <begin position="134"/>
        <end position="137"/>
    </location>
    <ligand>
        <name>4-CDP-2-C-methyl-D-erythritol 2-phosphate</name>
        <dbReference type="ChEBI" id="CHEBI:57919"/>
    </ligand>
</feature>
<feature type="binding site" evidence="1">
    <location>
        <position position="141"/>
    </location>
    <ligand>
        <name>4-CDP-2-C-methyl-D-erythritol 2-phosphate</name>
        <dbReference type="ChEBI" id="CHEBI:57919"/>
    </ligand>
</feature>
<feature type="binding site" evidence="1">
    <location>
        <position position="144"/>
    </location>
    <ligand>
        <name>4-CDP-2-C-methyl-D-erythritol 2-phosphate</name>
        <dbReference type="ChEBI" id="CHEBI:57919"/>
    </ligand>
</feature>
<feature type="site" description="Transition state stabilizer" evidence="1">
    <location>
        <position position="36"/>
    </location>
</feature>
<feature type="site" description="Transition state stabilizer" evidence="1">
    <location>
        <position position="135"/>
    </location>
</feature>
<evidence type="ECO:0000255" key="1">
    <source>
        <dbReference type="HAMAP-Rule" id="MF_00107"/>
    </source>
</evidence>
<organism>
    <name type="scientific">Halorhodospira halophila (strain DSM 244 / SL1)</name>
    <name type="common">Ectothiorhodospira halophila (strain DSM 244 / SL1)</name>
    <dbReference type="NCBI Taxonomy" id="349124"/>
    <lineage>
        <taxon>Bacteria</taxon>
        <taxon>Pseudomonadati</taxon>
        <taxon>Pseudomonadota</taxon>
        <taxon>Gammaproteobacteria</taxon>
        <taxon>Chromatiales</taxon>
        <taxon>Ectothiorhodospiraceae</taxon>
        <taxon>Halorhodospira</taxon>
    </lineage>
</organism>
<dbReference type="EC" id="4.6.1.12" evidence="1"/>
<dbReference type="EMBL" id="CP000544">
    <property type="protein sequence ID" value="ABM62201.1"/>
    <property type="molecule type" value="Genomic_DNA"/>
</dbReference>
<dbReference type="SMR" id="A1WWY9"/>
<dbReference type="STRING" id="349124.Hhal_1434"/>
<dbReference type="KEGG" id="hha:Hhal_1434"/>
<dbReference type="eggNOG" id="COG0245">
    <property type="taxonomic scope" value="Bacteria"/>
</dbReference>
<dbReference type="HOGENOM" id="CLU_084630_2_0_6"/>
<dbReference type="UniPathway" id="UPA00056">
    <property type="reaction ID" value="UER00095"/>
</dbReference>
<dbReference type="Proteomes" id="UP000000647">
    <property type="component" value="Chromosome"/>
</dbReference>
<dbReference type="GO" id="GO:0008685">
    <property type="term" value="F:2-C-methyl-D-erythritol 2,4-cyclodiphosphate synthase activity"/>
    <property type="evidence" value="ECO:0007669"/>
    <property type="project" value="UniProtKB-UniRule"/>
</dbReference>
<dbReference type="GO" id="GO:0046872">
    <property type="term" value="F:metal ion binding"/>
    <property type="evidence" value="ECO:0007669"/>
    <property type="project" value="UniProtKB-KW"/>
</dbReference>
<dbReference type="GO" id="GO:0019288">
    <property type="term" value="P:isopentenyl diphosphate biosynthetic process, methylerythritol 4-phosphate pathway"/>
    <property type="evidence" value="ECO:0007669"/>
    <property type="project" value="UniProtKB-UniRule"/>
</dbReference>
<dbReference type="GO" id="GO:0016114">
    <property type="term" value="P:terpenoid biosynthetic process"/>
    <property type="evidence" value="ECO:0007669"/>
    <property type="project" value="InterPro"/>
</dbReference>
<dbReference type="CDD" id="cd00554">
    <property type="entry name" value="MECDP_synthase"/>
    <property type="match status" value="1"/>
</dbReference>
<dbReference type="Gene3D" id="3.30.1330.50">
    <property type="entry name" value="2-C-methyl-D-erythritol 2,4-cyclodiphosphate synthase"/>
    <property type="match status" value="1"/>
</dbReference>
<dbReference type="HAMAP" id="MF_00107">
    <property type="entry name" value="IspF"/>
    <property type="match status" value="1"/>
</dbReference>
<dbReference type="InterPro" id="IPR003526">
    <property type="entry name" value="MECDP_synthase"/>
</dbReference>
<dbReference type="InterPro" id="IPR020555">
    <property type="entry name" value="MECDP_synthase_CS"/>
</dbReference>
<dbReference type="InterPro" id="IPR036571">
    <property type="entry name" value="MECDP_synthase_sf"/>
</dbReference>
<dbReference type="NCBIfam" id="TIGR00151">
    <property type="entry name" value="ispF"/>
    <property type="match status" value="1"/>
</dbReference>
<dbReference type="PANTHER" id="PTHR43181">
    <property type="entry name" value="2-C-METHYL-D-ERYTHRITOL 2,4-CYCLODIPHOSPHATE SYNTHASE, CHLOROPLASTIC"/>
    <property type="match status" value="1"/>
</dbReference>
<dbReference type="PANTHER" id="PTHR43181:SF1">
    <property type="entry name" value="2-C-METHYL-D-ERYTHRITOL 2,4-CYCLODIPHOSPHATE SYNTHASE, CHLOROPLASTIC"/>
    <property type="match status" value="1"/>
</dbReference>
<dbReference type="Pfam" id="PF02542">
    <property type="entry name" value="YgbB"/>
    <property type="match status" value="1"/>
</dbReference>
<dbReference type="SUPFAM" id="SSF69765">
    <property type="entry name" value="IpsF-like"/>
    <property type="match status" value="1"/>
</dbReference>
<dbReference type="PROSITE" id="PS01350">
    <property type="entry name" value="ISPF"/>
    <property type="match status" value="1"/>
</dbReference>
<gene>
    <name evidence="1" type="primary">ispF</name>
    <name type="ordered locus">Hhal_1434</name>
</gene>
<proteinExistence type="inferred from homology"/>
<accession>A1WWY9</accession>
<comment type="function">
    <text evidence="1">Involved in the biosynthesis of isopentenyl diphosphate (IPP) and dimethylallyl diphosphate (DMAPP), two major building blocks of isoprenoid compounds. Catalyzes the conversion of 4-diphosphocytidyl-2-C-methyl-D-erythritol 2-phosphate (CDP-ME2P) to 2-C-methyl-D-erythritol 2,4-cyclodiphosphate (ME-CPP) with a corresponding release of cytidine 5-monophosphate (CMP).</text>
</comment>
<comment type="catalytic activity">
    <reaction evidence="1">
        <text>4-CDP-2-C-methyl-D-erythritol 2-phosphate = 2-C-methyl-D-erythritol 2,4-cyclic diphosphate + CMP</text>
        <dbReference type="Rhea" id="RHEA:23864"/>
        <dbReference type="ChEBI" id="CHEBI:57919"/>
        <dbReference type="ChEBI" id="CHEBI:58483"/>
        <dbReference type="ChEBI" id="CHEBI:60377"/>
        <dbReference type="EC" id="4.6.1.12"/>
    </reaction>
</comment>
<comment type="cofactor">
    <cofactor evidence="1">
        <name>a divalent metal cation</name>
        <dbReference type="ChEBI" id="CHEBI:60240"/>
    </cofactor>
    <text evidence="1">Binds 1 divalent metal cation per subunit.</text>
</comment>
<comment type="pathway">
    <text evidence="1">Isoprenoid biosynthesis; isopentenyl diphosphate biosynthesis via DXP pathway; isopentenyl diphosphate from 1-deoxy-D-xylulose 5-phosphate: step 4/6.</text>
</comment>
<comment type="subunit">
    <text evidence="1">Homotrimer.</text>
</comment>
<comment type="similarity">
    <text evidence="1">Belongs to the IspF family.</text>
</comment>
<reference key="1">
    <citation type="submission" date="2006-12" db="EMBL/GenBank/DDBJ databases">
        <title>Complete sequence of Halorhodospira halophila SL1.</title>
        <authorList>
            <consortium name="US DOE Joint Genome Institute"/>
            <person name="Copeland A."/>
            <person name="Lucas S."/>
            <person name="Lapidus A."/>
            <person name="Barry K."/>
            <person name="Detter J.C."/>
            <person name="Glavina del Rio T."/>
            <person name="Hammon N."/>
            <person name="Israni S."/>
            <person name="Dalin E."/>
            <person name="Tice H."/>
            <person name="Pitluck S."/>
            <person name="Saunders E."/>
            <person name="Brettin T."/>
            <person name="Bruce D."/>
            <person name="Han C."/>
            <person name="Tapia R."/>
            <person name="Schmutz J."/>
            <person name="Larimer F."/>
            <person name="Land M."/>
            <person name="Hauser L."/>
            <person name="Kyrpides N."/>
            <person name="Mikhailova N."/>
            <person name="Hoff W."/>
            <person name="Richardson P."/>
        </authorList>
    </citation>
    <scope>NUCLEOTIDE SEQUENCE [LARGE SCALE GENOMIC DNA]</scope>
    <source>
        <strain>DSM 244 / SL1</strain>
    </source>
</reference>
<sequence>MIRIGQGFDVHRFAGKGEGFRLGGVAVPYHKRLEAHSDGDVLLHAITDGLLGACGMGDIGRHFPDDDPRWRDADSIGLLASTLRLAAEAGWVPVNVDGTVIAQAPKLAPYIGAMRQATADAMELSPGAVNVKATTSERLGFTGRGEGIAAMAVVLVESAPGRG</sequence>
<protein>
    <recommendedName>
        <fullName evidence="1">2-C-methyl-D-erythritol 2,4-cyclodiphosphate synthase</fullName>
        <shortName evidence="1">MECDP-synthase</shortName>
        <shortName evidence="1">MECPP-synthase</shortName>
        <shortName evidence="1">MECPS</shortName>
        <ecNumber evidence="1">4.6.1.12</ecNumber>
    </recommendedName>
</protein>
<keyword id="KW-0414">Isoprene biosynthesis</keyword>
<keyword id="KW-0456">Lyase</keyword>
<keyword id="KW-0479">Metal-binding</keyword>
<keyword id="KW-1185">Reference proteome</keyword>